<keyword id="KW-0002">3D-structure</keyword>
<keyword id="KW-0067">ATP-binding</keyword>
<keyword id="KW-0158">Chromosome</keyword>
<keyword id="KW-0227">DNA damage</keyword>
<keyword id="KW-0233">DNA recombination</keyword>
<keyword id="KW-0234">DNA repair</keyword>
<keyword id="KW-0547">Nucleotide-binding</keyword>
<keyword id="KW-0539">Nucleus</keyword>
<keyword id="KW-1185">Reference proteome</keyword>
<evidence type="ECO:0000255" key="1"/>
<evidence type="ECO:0000256" key="2">
    <source>
        <dbReference type="SAM" id="MobiDB-lite"/>
    </source>
</evidence>
<evidence type="ECO:0000269" key="3">
    <source>
    </source>
</evidence>
<evidence type="ECO:0000269" key="4">
    <source>
    </source>
</evidence>
<evidence type="ECO:0000269" key="5">
    <source>
    </source>
</evidence>
<evidence type="ECO:0000269" key="6">
    <source>
    </source>
</evidence>
<evidence type="ECO:0000269" key="7">
    <source>
    </source>
</evidence>
<evidence type="ECO:0000305" key="8"/>
<evidence type="ECO:0007829" key="9">
    <source>
        <dbReference type="PDB" id="3LDA"/>
    </source>
</evidence>
<gene>
    <name type="primary">RAD51</name>
    <name type="ordered locus">YER095W</name>
</gene>
<feature type="chain" id="PRO_0000122925" description="DNA repair protein RAD51">
    <location>
        <begin position="1"/>
        <end position="400"/>
    </location>
</feature>
<feature type="region of interest" description="Disordered" evidence="2">
    <location>
        <begin position="1"/>
        <end position="69"/>
    </location>
</feature>
<feature type="compositionally biased region" description="Polar residues" evidence="2">
    <location>
        <begin position="1"/>
        <end position="34"/>
    </location>
</feature>
<feature type="binding site" evidence="1">
    <location>
        <begin position="185"/>
        <end position="192"/>
    </location>
    <ligand>
        <name>ATP</name>
        <dbReference type="ChEBI" id="CHEBI:30616"/>
    </ligand>
</feature>
<feature type="helix" evidence="9">
    <location>
        <begin position="83"/>
        <end position="86"/>
    </location>
</feature>
<feature type="helix" evidence="9">
    <location>
        <begin position="93"/>
        <end position="101"/>
    </location>
</feature>
<feature type="helix" evidence="9">
    <location>
        <begin position="107"/>
        <end position="112"/>
    </location>
</feature>
<feature type="helix" evidence="9">
    <location>
        <begin position="115"/>
        <end position="119"/>
    </location>
</feature>
<feature type="helix" evidence="9">
    <location>
        <begin position="126"/>
        <end position="139"/>
    </location>
</feature>
<feature type="helix" evidence="9">
    <location>
        <begin position="147"/>
        <end position="155"/>
    </location>
</feature>
<feature type="helix" evidence="9">
    <location>
        <begin position="165"/>
        <end position="170"/>
    </location>
</feature>
<feature type="turn" evidence="9">
    <location>
        <begin position="171"/>
        <end position="173"/>
    </location>
</feature>
<feature type="strand" evidence="9">
    <location>
        <begin position="174"/>
        <end position="176"/>
    </location>
</feature>
<feature type="strand" evidence="9">
    <location>
        <begin position="179"/>
        <end position="186"/>
    </location>
</feature>
<feature type="helix" evidence="9">
    <location>
        <begin position="191"/>
        <end position="201"/>
    </location>
</feature>
<feature type="helix" evidence="9">
    <location>
        <begin position="206"/>
        <end position="208"/>
    </location>
</feature>
<feature type="strand" evidence="9">
    <location>
        <begin position="212"/>
        <end position="222"/>
    </location>
</feature>
<feature type="helix" evidence="9">
    <location>
        <begin position="226"/>
        <end position="235"/>
    </location>
</feature>
<feature type="helix" evidence="9">
    <location>
        <begin position="240"/>
        <end position="245"/>
    </location>
</feature>
<feature type="strand" evidence="9">
    <location>
        <begin position="247"/>
        <end position="251"/>
    </location>
</feature>
<feature type="helix" evidence="9">
    <location>
        <begin position="255"/>
        <end position="271"/>
    </location>
</feature>
<feature type="strand" evidence="9">
    <location>
        <begin position="274"/>
        <end position="280"/>
    </location>
</feature>
<feature type="helix" evidence="9">
    <location>
        <begin position="282"/>
        <end position="285"/>
    </location>
</feature>
<feature type="helix" evidence="9">
    <location>
        <begin position="296"/>
        <end position="317"/>
    </location>
</feature>
<feature type="strand" evidence="9">
    <location>
        <begin position="320"/>
        <end position="326"/>
    </location>
</feature>
<feature type="helix" evidence="9">
    <location>
        <begin position="349"/>
        <end position="353"/>
    </location>
</feature>
<feature type="strand" evidence="9">
    <location>
        <begin position="355"/>
        <end position="362"/>
    </location>
</feature>
<feature type="strand" evidence="9">
    <location>
        <begin position="367"/>
        <end position="374"/>
    </location>
</feature>
<feature type="strand" evidence="9">
    <location>
        <begin position="376"/>
        <end position="378"/>
    </location>
</feature>
<feature type="strand" evidence="9">
    <location>
        <begin position="382"/>
        <end position="388"/>
    </location>
</feature>
<feature type="strand" evidence="9">
    <location>
        <begin position="391"/>
        <end position="393"/>
    </location>
</feature>
<comment type="function">
    <text evidence="5">Required both for recombination and for the repair of DNA damage caused by X-rays. Its function may be modulated by interaction with other repair proteins. RAD52 interacts directly with RAD51, via its C-terminus. Forms a nucleoprotein filament with DNA as an early intermediate in recombination.</text>
</comment>
<comment type="subunit">
    <text evidence="3 5 6 7">Part of a repair/recombination complex that includes RAD51, RAD52 and RAD54. Interacts with HED1, RDH54 and SAW1.</text>
</comment>
<comment type="interaction">
    <interactant intactId="EBI-14709">
        <id>P25454</id>
    </interactant>
    <interactant intactId="EBI-14709">
        <id>P25454</id>
        <label>RAD51</label>
    </interactant>
    <organismsDiffer>false</organismsDiffer>
    <experiments>3</experiments>
</comment>
<comment type="interaction">
    <interactant intactId="EBI-14709">
        <id>P25454</id>
    </interactant>
    <interactant intactId="EBI-14719">
        <id>P06778</id>
        <label>RAD52</label>
    </interactant>
    <organismsDiffer>false</organismsDiffer>
    <experiments>9</experiments>
</comment>
<comment type="interaction">
    <interactant intactId="EBI-14709">
        <id>P25454</id>
    </interactant>
    <interactant intactId="EBI-14728">
        <id>P32863</id>
        <label>RAD54</label>
    </interactant>
    <organismsDiffer>false</organismsDiffer>
    <experiments>2</experiments>
</comment>
<comment type="interaction">
    <interactant intactId="EBI-14709">
        <id>P25454</id>
    </interactant>
    <interactant intactId="EBI-14737">
        <id>P38953</id>
        <label>RAD55</label>
    </interactant>
    <organismsDiffer>false</organismsDiffer>
    <experiments>6</experiments>
</comment>
<comment type="subcellular location">
    <subcellularLocation>
        <location evidence="5">Nucleus</location>
    </subcellularLocation>
    <subcellularLocation>
        <location evidence="5">Chromosome</location>
    </subcellularLocation>
    <text>Localizes as foci on meiotic chromosomes.</text>
</comment>
<comment type="developmental stage">
    <text>RAD51 is cell cycle regulated, peaking around the G1-to-S transition.</text>
</comment>
<comment type="induction">
    <text>By X-rays.</text>
</comment>
<comment type="miscellaneous">
    <text evidence="4">Present with 6960 molecules/cell in log phase SD medium.</text>
</comment>
<comment type="similarity">
    <text evidence="8">Belongs to the RecA family. RAD51 subfamily.</text>
</comment>
<organism>
    <name type="scientific">Saccharomyces cerevisiae (strain ATCC 204508 / S288c)</name>
    <name type="common">Baker's yeast</name>
    <dbReference type="NCBI Taxonomy" id="559292"/>
    <lineage>
        <taxon>Eukaryota</taxon>
        <taxon>Fungi</taxon>
        <taxon>Dikarya</taxon>
        <taxon>Ascomycota</taxon>
        <taxon>Saccharomycotina</taxon>
        <taxon>Saccharomycetes</taxon>
        <taxon>Saccharomycetales</taxon>
        <taxon>Saccharomycetaceae</taxon>
        <taxon>Saccharomyces</taxon>
    </lineage>
</organism>
<sequence>MSQVQEQHISESQLQYGNGSLMSTVPADLSQSVVDGNGNGSSEDIEATNGSGDGGGLQEQAEAQGEMEDEAYDEAALGSFVPIEKLQVNGITMADVKKLRESGLHTAEAVAYAPRKDLLEIKGISEAKADKLLNEAARLVPMGFVTAADFHMRRSELICLTTGSKNLDTLLGGGVETGSITELFGEFRTGKSQLCHTLAVTCQIPLDIGGGEGKCLYIDTEGTFRPVRLVSIAQRFGLDPDDALNNVAYARAYNADHQLRLLDAAAQMMSESRFSLIVVDSVMALYRTDFSGRGELSARQMHLAKFMRALQRLADQFGVAVVVTNQVVAQVDGGMAFNPDPKKPIGGNIMAHSSTTRLGFKKGKGCQRLCKVVDSPCLPEAECVFAIYEDGVGDPREEDE</sequence>
<accession>P25454</accession>
<accession>D3DM03</accession>
<dbReference type="EMBL" id="X64270">
    <property type="protein sequence ID" value="CAA45563.1"/>
    <property type="molecule type" value="Genomic_DNA"/>
</dbReference>
<dbReference type="EMBL" id="M88470">
    <property type="protein sequence ID" value="AAA34948.1"/>
    <property type="molecule type" value="Genomic_DNA"/>
</dbReference>
<dbReference type="EMBL" id="D10023">
    <property type="protein sequence ID" value="BAA00913.1"/>
    <property type="molecule type" value="Genomic_DNA"/>
</dbReference>
<dbReference type="EMBL" id="U18839">
    <property type="protein sequence ID" value="AAB64650.1"/>
    <property type="molecule type" value="Genomic_DNA"/>
</dbReference>
<dbReference type="EMBL" id="BK006939">
    <property type="protein sequence ID" value="DAA07757.1"/>
    <property type="molecule type" value="Genomic_DNA"/>
</dbReference>
<dbReference type="PIR" id="A44348">
    <property type="entry name" value="A44348"/>
</dbReference>
<dbReference type="RefSeq" id="NP_011021.3">
    <property type="nucleotide sequence ID" value="NM_001178986.3"/>
</dbReference>
<dbReference type="PDB" id="1SZP">
    <property type="method" value="X-ray"/>
    <property type="resolution" value="3.25 A"/>
    <property type="chains" value="A/B/C/D/E/F=81-400"/>
</dbReference>
<dbReference type="PDB" id="3LDA">
    <property type="method" value="X-ray"/>
    <property type="resolution" value="2.50 A"/>
    <property type="chains" value="A=1-400"/>
</dbReference>
<dbReference type="PDB" id="9B2D">
    <property type="method" value="EM"/>
    <property type="resolution" value="2.40 A"/>
    <property type="chains" value="A/B/C/D/E/F=1-400"/>
</dbReference>
<dbReference type="PDB" id="9D46">
    <property type="method" value="EM"/>
    <property type="resolution" value="3.06 A"/>
    <property type="chains" value="A/B/C/D/E/F=80-400"/>
</dbReference>
<dbReference type="PDB" id="9E6L">
    <property type="method" value="EM"/>
    <property type="resolution" value="3.30 A"/>
    <property type="chains" value="A/B/C/D/E/F=80-400"/>
</dbReference>
<dbReference type="PDB" id="9E6N">
    <property type="method" value="EM"/>
    <property type="resolution" value="2.80 A"/>
    <property type="chains" value="A/B/C/D/E/F=80-400"/>
</dbReference>
<dbReference type="PDB" id="9ED3">
    <property type="method" value="EM"/>
    <property type="resolution" value="2.52 A"/>
    <property type="chains" value="A/B/C/D/E/F=1-400"/>
</dbReference>
<dbReference type="PDBsum" id="1SZP"/>
<dbReference type="PDBsum" id="3LDA"/>
<dbReference type="PDBsum" id="9B2D"/>
<dbReference type="PDBsum" id="9D46"/>
<dbReference type="PDBsum" id="9E6L"/>
<dbReference type="PDBsum" id="9E6N"/>
<dbReference type="PDBsum" id="9ED3"/>
<dbReference type="EMDB" id="EMD-44104"/>
<dbReference type="EMDB" id="EMD-46550"/>
<dbReference type="EMDB" id="EMD-47572"/>
<dbReference type="EMDB" id="EMD-47573"/>
<dbReference type="SMR" id="P25454"/>
<dbReference type="BioGRID" id="36841">
    <property type="interactions" value="554"/>
</dbReference>
<dbReference type="DIP" id="DIP-195N"/>
<dbReference type="FunCoup" id="P25454">
    <property type="interactions" value="1048"/>
</dbReference>
<dbReference type="IntAct" id="P25454">
    <property type="interactions" value="46"/>
</dbReference>
<dbReference type="MINT" id="P25454"/>
<dbReference type="STRING" id="4932.YER095W"/>
<dbReference type="iPTMnet" id="P25454"/>
<dbReference type="PaxDb" id="4932-YER095W"/>
<dbReference type="PeptideAtlas" id="P25454"/>
<dbReference type="EnsemblFungi" id="YER095W_mRNA">
    <property type="protein sequence ID" value="YER095W"/>
    <property type="gene ID" value="YER095W"/>
</dbReference>
<dbReference type="GeneID" id="856831"/>
<dbReference type="KEGG" id="sce:YER095W"/>
<dbReference type="AGR" id="SGD:S000000897"/>
<dbReference type="SGD" id="S000000897">
    <property type="gene designation" value="RAD51"/>
</dbReference>
<dbReference type="VEuPathDB" id="FungiDB:YER095W"/>
<dbReference type="eggNOG" id="KOG1433">
    <property type="taxonomic scope" value="Eukaryota"/>
</dbReference>
<dbReference type="GeneTree" id="ENSGT00940000156157"/>
<dbReference type="HOGENOM" id="CLU_041732_0_0_1"/>
<dbReference type="InParanoid" id="P25454"/>
<dbReference type="OMA" id="RAYNSNH"/>
<dbReference type="OrthoDB" id="10251254at2759"/>
<dbReference type="BioCyc" id="YEAST:G3O-30262-MONOMER"/>
<dbReference type="Reactome" id="R-SCE-5693616">
    <property type="pathway name" value="Presynaptic phase of homologous DNA pairing and strand exchange"/>
</dbReference>
<dbReference type="BioGRID-ORCS" id="856831">
    <property type="hits" value="3 hits in 10 CRISPR screens"/>
</dbReference>
<dbReference type="EvolutionaryTrace" id="P25454"/>
<dbReference type="PRO" id="PR:P25454"/>
<dbReference type="Proteomes" id="UP000002311">
    <property type="component" value="Chromosome V"/>
</dbReference>
<dbReference type="RNAct" id="P25454">
    <property type="molecule type" value="protein"/>
</dbReference>
<dbReference type="GO" id="GO:0000794">
    <property type="term" value="C:condensed nuclear chromosome"/>
    <property type="evidence" value="ECO:0000314"/>
    <property type="project" value="SGD"/>
</dbReference>
<dbReference type="GO" id="GO:0000262">
    <property type="term" value="C:mitochondrial chromosome"/>
    <property type="evidence" value="ECO:0000314"/>
    <property type="project" value="SGD"/>
</dbReference>
<dbReference type="GO" id="GO:0005759">
    <property type="term" value="C:mitochondrial matrix"/>
    <property type="evidence" value="ECO:0000314"/>
    <property type="project" value="SGD"/>
</dbReference>
<dbReference type="GO" id="GO:0000228">
    <property type="term" value="C:nuclear chromosome"/>
    <property type="evidence" value="ECO:0000314"/>
    <property type="project" value="SGD"/>
</dbReference>
<dbReference type="GO" id="GO:0005524">
    <property type="term" value="F:ATP binding"/>
    <property type="evidence" value="ECO:0007669"/>
    <property type="project" value="UniProtKB-KW"/>
</dbReference>
<dbReference type="GO" id="GO:0016887">
    <property type="term" value="F:ATP hydrolysis activity"/>
    <property type="evidence" value="ECO:0007669"/>
    <property type="project" value="InterPro"/>
</dbReference>
<dbReference type="GO" id="GO:0008094">
    <property type="term" value="F:ATP-dependent activity, acting on DNA"/>
    <property type="evidence" value="ECO:0000314"/>
    <property type="project" value="SGD"/>
</dbReference>
<dbReference type="GO" id="GO:0140664">
    <property type="term" value="F:ATP-dependent DNA damage sensor activity"/>
    <property type="evidence" value="ECO:0007669"/>
    <property type="project" value="InterPro"/>
</dbReference>
<dbReference type="GO" id="GO:0003677">
    <property type="term" value="F:DNA binding"/>
    <property type="evidence" value="ECO:0000314"/>
    <property type="project" value="SGD"/>
</dbReference>
<dbReference type="GO" id="GO:0000150">
    <property type="term" value="F:DNA strand exchange activity"/>
    <property type="evidence" value="ECO:0000314"/>
    <property type="project" value="SGD"/>
</dbReference>
<dbReference type="GO" id="GO:0003690">
    <property type="term" value="F:double-stranded DNA binding"/>
    <property type="evidence" value="ECO:0000314"/>
    <property type="project" value="SGD"/>
</dbReference>
<dbReference type="GO" id="GO:0042802">
    <property type="term" value="F:identical protein binding"/>
    <property type="evidence" value="ECO:0000353"/>
    <property type="project" value="IntAct"/>
</dbReference>
<dbReference type="GO" id="GO:0003697">
    <property type="term" value="F:single-stranded DNA binding"/>
    <property type="evidence" value="ECO:0000314"/>
    <property type="project" value="SGD"/>
</dbReference>
<dbReference type="GO" id="GO:0070192">
    <property type="term" value="P:chromosome organization involved in meiotic cell cycle"/>
    <property type="evidence" value="ECO:0000318"/>
    <property type="project" value="GO_Central"/>
</dbReference>
<dbReference type="GO" id="GO:0000730">
    <property type="term" value="P:DNA recombinase assembly"/>
    <property type="evidence" value="ECO:0000318"/>
    <property type="project" value="GO_Central"/>
</dbReference>
<dbReference type="GO" id="GO:0006310">
    <property type="term" value="P:DNA recombination"/>
    <property type="evidence" value="ECO:0000314"/>
    <property type="project" value="SGD"/>
</dbReference>
<dbReference type="GO" id="GO:0042148">
    <property type="term" value="P:DNA strand invasion"/>
    <property type="evidence" value="ECO:0000314"/>
    <property type="project" value="SGD"/>
</dbReference>
<dbReference type="GO" id="GO:0006302">
    <property type="term" value="P:double-strand break repair"/>
    <property type="evidence" value="ECO:0000315"/>
    <property type="project" value="SGD"/>
</dbReference>
<dbReference type="GO" id="GO:0000724">
    <property type="term" value="P:double-strand break repair via homologous recombination"/>
    <property type="evidence" value="ECO:0000304"/>
    <property type="project" value="BHF-UCL"/>
</dbReference>
<dbReference type="GO" id="GO:0000086">
    <property type="term" value="P:G2/M transition of mitotic cell cycle"/>
    <property type="evidence" value="ECO:0000314"/>
    <property type="project" value="SGD"/>
</dbReference>
<dbReference type="GO" id="GO:0030491">
    <property type="term" value="P:heteroduplex formation"/>
    <property type="evidence" value="ECO:0000314"/>
    <property type="project" value="SGD"/>
</dbReference>
<dbReference type="GO" id="GO:0000709">
    <property type="term" value="P:meiotic joint molecule formation"/>
    <property type="evidence" value="ECO:0000315"/>
    <property type="project" value="SGD"/>
</dbReference>
<dbReference type="GO" id="GO:0043504">
    <property type="term" value="P:mitochondrial DNA repair"/>
    <property type="evidence" value="ECO:0000315"/>
    <property type="project" value="SGD"/>
</dbReference>
<dbReference type="GO" id="GO:0006312">
    <property type="term" value="P:mitotic recombination"/>
    <property type="evidence" value="ECO:0000318"/>
    <property type="project" value="GO_Central"/>
</dbReference>
<dbReference type="GO" id="GO:1990426">
    <property type="term" value="P:mitotic recombination-dependent replication fork processing"/>
    <property type="evidence" value="ECO:0007669"/>
    <property type="project" value="InterPro"/>
</dbReference>
<dbReference type="GO" id="GO:0006289">
    <property type="term" value="P:nucleotide-excision repair"/>
    <property type="evidence" value="ECO:0000315"/>
    <property type="project" value="SGD"/>
</dbReference>
<dbReference type="GO" id="GO:0007131">
    <property type="term" value="P:reciprocal meiotic recombination"/>
    <property type="evidence" value="ECO:0000315"/>
    <property type="project" value="SGD"/>
</dbReference>
<dbReference type="GO" id="GO:0000722">
    <property type="term" value="P:telomere maintenance via recombination"/>
    <property type="evidence" value="ECO:0000315"/>
    <property type="project" value="SGD"/>
</dbReference>
<dbReference type="CDD" id="cd19513">
    <property type="entry name" value="Rad51"/>
    <property type="match status" value="1"/>
</dbReference>
<dbReference type="FunFam" id="1.10.150.20:FF:000008">
    <property type="entry name" value="DNA repair protein RAD51 homolog"/>
    <property type="match status" value="1"/>
</dbReference>
<dbReference type="FunFam" id="3.40.50.300:FF:000092">
    <property type="entry name" value="DNA repair protein Rad51 homolog"/>
    <property type="match status" value="1"/>
</dbReference>
<dbReference type="Gene3D" id="1.10.150.20">
    <property type="entry name" value="5' to 3' exonuclease, C-terminal subdomain"/>
    <property type="match status" value="1"/>
</dbReference>
<dbReference type="Gene3D" id="3.40.50.300">
    <property type="entry name" value="P-loop containing nucleotide triphosphate hydrolases"/>
    <property type="match status" value="1"/>
</dbReference>
<dbReference type="InterPro" id="IPR003593">
    <property type="entry name" value="AAA+_ATPase"/>
</dbReference>
<dbReference type="InterPro" id="IPR011941">
    <property type="entry name" value="DNA_recomb/repair_Rad51"/>
</dbReference>
<dbReference type="InterPro" id="IPR013632">
    <property type="entry name" value="DNA_recomb/repair_Rad51_C"/>
</dbReference>
<dbReference type="InterPro" id="IPR016467">
    <property type="entry name" value="DNA_recomb/repair_RecA-like"/>
</dbReference>
<dbReference type="InterPro" id="IPR010995">
    <property type="entry name" value="DNA_repair_Rad51/TF_NusA_a-hlx"/>
</dbReference>
<dbReference type="InterPro" id="IPR027417">
    <property type="entry name" value="P-loop_NTPase"/>
</dbReference>
<dbReference type="InterPro" id="IPR020588">
    <property type="entry name" value="RecA_ATP-bd"/>
</dbReference>
<dbReference type="InterPro" id="IPR020587">
    <property type="entry name" value="RecA_monomer-monomer_interface"/>
</dbReference>
<dbReference type="NCBIfam" id="NF003301">
    <property type="entry name" value="PRK04301.1"/>
    <property type="match status" value="1"/>
</dbReference>
<dbReference type="NCBIfam" id="TIGR02239">
    <property type="entry name" value="recomb_RAD51"/>
    <property type="match status" value="1"/>
</dbReference>
<dbReference type="PANTHER" id="PTHR22942:SF39">
    <property type="entry name" value="DNA REPAIR PROTEIN RAD51 HOMOLOG 1"/>
    <property type="match status" value="1"/>
</dbReference>
<dbReference type="PANTHER" id="PTHR22942">
    <property type="entry name" value="RECA/RAD51/RADA DNA STRAND-PAIRING FAMILY MEMBER"/>
    <property type="match status" value="1"/>
</dbReference>
<dbReference type="Pfam" id="PF14520">
    <property type="entry name" value="HHH_5"/>
    <property type="match status" value="1"/>
</dbReference>
<dbReference type="Pfam" id="PF08423">
    <property type="entry name" value="Rad51"/>
    <property type="match status" value="1"/>
</dbReference>
<dbReference type="PIRSF" id="PIRSF005856">
    <property type="entry name" value="Rad51"/>
    <property type="match status" value="1"/>
</dbReference>
<dbReference type="SMART" id="SM00382">
    <property type="entry name" value="AAA"/>
    <property type="match status" value="1"/>
</dbReference>
<dbReference type="SUPFAM" id="SSF52540">
    <property type="entry name" value="P-loop containing nucleoside triphosphate hydrolases"/>
    <property type="match status" value="1"/>
</dbReference>
<dbReference type="SUPFAM" id="SSF47794">
    <property type="entry name" value="Rad51 N-terminal domain-like"/>
    <property type="match status" value="1"/>
</dbReference>
<dbReference type="PROSITE" id="PS50162">
    <property type="entry name" value="RECA_2"/>
    <property type="match status" value="1"/>
</dbReference>
<dbReference type="PROSITE" id="PS50163">
    <property type="entry name" value="RECA_3"/>
    <property type="match status" value="1"/>
</dbReference>
<name>RAD51_YEAST</name>
<protein>
    <recommendedName>
        <fullName>DNA repair protein RAD51</fullName>
    </recommendedName>
</protein>
<reference key="1">
    <citation type="journal article" date="1992" name="Mol. Cell. Biol.">
        <title>Nucleotide sequence and transcriptional regulation of the yeast recombinational repair gene RAD51.</title>
        <authorList>
            <person name="Basile G.M."/>
            <person name="Aker M."/>
            <person name="Mortimer R.K."/>
        </authorList>
    </citation>
    <scope>NUCLEOTIDE SEQUENCE [GENOMIC DNA]</scope>
</reference>
<reference key="2">
    <citation type="journal article" date="1992" name="Mol. Cell. Biol.">
        <title>Semidominant suppressors of Srs2 helicase mutations of Saccharomyces cerevisiae map in the RAD51 gene, whose sequence predicts a protein with similarities to procaryotic RecA proteins.</title>
        <authorList>
            <person name="Aboussekhra A."/>
            <person name="Chanet R."/>
            <person name="Adjiri A."/>
            <person name="Fabre F."/>
        </authorList>
    </citation>
    <scope>NUCLEOTIDE SEQUENCE [GENOMIC DNA]</scope>
</reference>
<reference key="3">
    <citation type="journal article" date="1992" name="Cell">
        <title>Rad51 protein involved in repair and recombination in S. cerevisiae is a RecA-like protein.</title>
        <authorList>
            <person name="Shinohara A."/>
            <person name="Ogawa H."/>
            <person name="Ogawa T."/>
        </authorList>
    </citation>
    <scope>NUCLEOTIDE SEQUENCE [GENOMIC DNA]</scope>
</reference>
<reference key="4">
    <citation type="journal article" date="1997" name="Nature">
        <title>The nucleotide sequence of Saccharomyces cerevisiae chromosome V.</title>
        <authorList>
            <person name="Dietrich F.S."/>
            <person name="Mulligan J.T."/>
            <person name="Hennessy K.M."/>
            <person name="Yelton M.A."/>
            <person name="Allen E."/>
            <person name="Araujo R."/>
            <person name="Aviles E."/>
            <person name="Berno A."/>
            <person name="Brennan T."/>
            <person name="Carpenter J."/>
            <person name="Chen E."/>
            <person name="Cherry J.M."/>
            <person name="Chung E."/>
            <person name="Duncan M."/>
            <person name="Guzman E."/>
            <person name="Hartzell G."/>
            <person name="Hunicke-Smith S."/>
            <person name="Hyman R.W."/>
            <person name="Kayser A."/>
            <person name="Komp C."/>
            <person name="Lashkari D."/>
            <person name="Lew H."/>
            <person name="Lin D."/>
            <person name="Mosedale D."/>
            <person name="Nakahara K."/>
            <person name="Namath A."/>
            <person name="Norgren R."/>
            <person name="Oefner P."/>
            <person name="Oh C."/>
            <person name="Petel F.X."/>
            <person name="Roberts D."/>
            <person name="Sehl P."/>
            <person name="Schramm S."/>
            <person name="Shogren T."/>
            <person name="Smith V."/>
            <person name="Taylor P."/>
            <person name="Wei Y."/>
            <person name="Botstein D."/>
            <person name="Davis R.W."/>
        </authorList>
    </citation>
    <scope>NUCLEOTIDE SEQUENCE [LARGE SCALE GENOMIC DNA]</scope>
    <source>
        <strain>ATCC 204508 / S288c</strain>
    </source>
</reference>
<reference key="5">
    <citation type="journal article" date="2014" name="G3 (Bethesda)">
        <title>The reference genome sequence of Saccharomyces cerevisiae: Then and now.</title>
        <authorList>
            <person name="Engel S.R."/>
            <person name="Dietrich F.S."/>
            <person name="Fisk D.G."/>
            <person name="Binkley G."/>
            <person name="Balakrishnan R."/>
            <person name="Costanzo M.C."/>
            <person name="Dwight S.S."/>
            <person name="Hitz B.C."/>
            <person name="Karra K."/>
            <person name="Nash R.S."/>
            <person name="Weng S."/>
            <person name="Wong E.D."/>
            <person name="Lloyd P."/>
            <person name="Skrzypek M.S."/>
            <person name="Miyasato S.R."/>
            <person name="Simison M."/>
            <person name="Cherry J.M."/>
        </authorList>
    </citation>
    <scope>GENOME REANNOTATION</scope>
    <source>
        <strain>ATCC 204508 / S288c</strain>
    </source>
</reference>
<reference key="6">
    <citation type="journal article" date="1998" name="Nature">
        <title>Catalysis of homologous DNA pairing by yeast Rad51 and Rad54 proteins.</title>
        <authorList>
            <person name="Petukhova G."/>
            <person name="Stratton S."/>
            <person name="Sung P."/>
        </authorList>
    </citation>
    <scope>INTERACTION WITH RAD54</scope>
</reference>
<reference key="7">
    <citation type="journal article" date="2000" name="Genes Dev.">
        <title>Promotion of Rad51-dependent D-loop formation by yeast recombination factor Rdh54/Tid1.</title>
        <authorList>
            <person name="Petukhova G."/>
            <person name="Sung P."/>
            <person name="Klein H."/>
        </authorList>
    </citation>
    <scope>INTERACTION WITH RDH54</scope>
</reference>
<reference key="8">
    <citation type="journal article" date="2003" name="Nature">
        <title>Global analysis of protein expression in yeast.</title>
        <authorList>
            <person name="Ghaemmaghami S."/>
            <person name="Huh W.-K."/>
            <person name="Bower K."/>
            <person name="Howson R.W."/>
            <person name="Belle A."/>
            <person name="Dephoure N."/>
            <person name="O'Shea E.K."/>
            <person name="Weissman J.S."/>
        </authorList>
    </citation>
    <scope>LEVEL OF PROTEIN EXPRESSION [LARGE SCALE ANALYSIS]</scope>
</reference>
<reference key="9">
    <citation type="journal article" date="2006" name="Genes Dev.">
        <title>Budding yeast Hed1 down-regulates the mitotic recombination machinery when meiotic recombination is impaired.</title>
        <authorList>
            <person name="Tsubouchi H."/>
            <person name="Roeder G.S."/>
        </authorList>
    </citation>
    <scope>FUNCTION</scope>
    <scope>SUBCELLULAR LOCATION</scope>
    <scope>INTERACTION WITH RAD51</scope>
</reference>
<reference key="10">
    <citation type="journal article" date="2008" name="Mol. Cell">
        <title>Microarray-based genetic screen defines SAW1, a gene required for Rad1/Rad10-dependent processing of recombination intermediates.</title>
        <authorList>
            <person name="Li F."/>
            <person name="Dong J."/>
            <person name="Pan X."/>
            <person name="Oum J.-H."/>
            <person name="Boeke J.D."/>
            <person name="Lee S.E."/>
        </authorList>
    </citation>
    <scope>INTERACTION WITH SAW1</scope>
</reference>
<reference key="11">
    <citation type="journal article" date="2004" name="Nat. Struct. Mol. Biol.">
        <title>Crystal structure of a Rad51 filament.</title>
        <authorList>
            <person name="Conway A.B."/>
            <person name="Lynch T.W."/>
            <person name="Zhang Y."/>
            <person name="Fortin G.S."/>
            <person name="Fung C.W."/>
            <person name="Symington L.S."/>
            <person name="Rice P.A."/>
        </authorList>
    </citation>
    <scope>X-RAY CRYSTALLOGRAPHY (3.25 ANGSTROMS) OF 81-400</scope>
</reference>
<proteinExistence type="evidence at protein level"/>